<reference key="1">
    <citation type="journal article" date="1987" name="J. Biol. Chem.">
        <title>Identification of a possible nucleotide binding site in CheW, a protein required for sensory transduction in bacterial chemotaxis.</title>
        <authorList>
            <person name="Stock A."/>
            <person name="Mottonen J."/>
            <person name="Chen T."/>
            <person name="Stock J."/>
        </authorList>
    </citation>
    <scope>NUCLEOTIDE SEQUENCE [GENOMIC DNA]</scope>
</reference>
<reference key="2">
    <citation type="journal article" date="2001" name="Nature">
        <title>Complete genome sequence of Salmonella enterica serovar Typhimurium LT2.</title>
        <authorList>
            <person name="McClelland M."/>
            <person name="Sanderson K.E."/>
            <person name="Spieth J."/>
            <person name="Clifton S.W."/>
            <person name="Latreille P."/>
            <person name="Courtney L."/>
            <person name="Porwollik S."/>
            <person name="Ali J."/>
            <person name="Dante M."/>
            <person name="Du F."/>
            <person name="Hou S."/>
            <person name="Layman D."/>
            <person name="Leonard S."/>
            <person name="Nguyen C."/>
            <person name="Scott K."/>
            <person name="Holmes A."/>
            <person name="Grewal N."/>
            <person name="Mulvaney E."/>
            <person name="Ryan E."/>
            <person name="Sun H."/>
            <person name="Florea L."/>
            <person name="Miller W."/>
            <person name="Stoneking T."/>
            <person name="Nhan M."/>
            <person name="Waterston R."/>
            <person name="Wilson R.K."/>
        </authorList>
    </citation>
    <scope>NUCLEOTIDE SEQUENCE [LARGE SCALE GENOMIC DNA]</scope>
    <source>
        <strain>LT2 / SGSC1412 / ATCC 700720</strain>
    </source>
</reference>
<keyword id="KW-0145">Chemotaxis</keyword>
<keyword id="KW-0963">Cytoplasm</keyword>
<keyword id="KW-1185">Reference proteome</keyword>
<protein>
    <recommendedName>
        <fullName>Chemotaxis protein CheW</fullName>
    </recommendedName>
</protein>
<sequence length="167" mass="18049">MTGMSNVSKLAGEPSGQEFLVFTLGNEEYGIDILKVQEIRGYDQVTRIANTPAFIKGVTNLRGVIVPIVDLRVKFCEGDVEYDDNTVVIVLNLGQRVVGIVVDGVSDVLSLTAEQIRPAPEFAVTLSTEYLTGLGALGERMLILVNIEKLLNSEEMALLDIAASHVA</sequence>
<gene>
    <name type="primary">cheW</name>
    <name type="ordered locus">STM1920</name>
</gene>
<accession>P06110</accession>
<feature type="chain" id="PRO_0000198347" description="Chemotaxis protein CheW">
    <location>
        <begin position="1"/>
        <end position="167"/>
    </location>
</feature>
<feature type="domain" description="CheW-like" evidence="1">
    <location>
        <begin position="16"/>
        <end position="156"/>
    </location>
</feature>
<name>CHEW_SALTY</name>
<comment type="function">
    <text>Involved in the transmission of sensory signals from the chemoreceptors to the flagellar motors.</text>
</comment>
<comment type="interaction">
    <interactant intactId="EBI-10686956">
        <id>P06110</id>
    </interactant>
    <interactant intactId="EBI-10686930">
        <id>P65977</id>
        <label>recA</label>
    </interactant>
    <organismsDiffer>false</organismsDiffer>
    <experiments>3</experiments>
</comment>
<comment type="subcellular location">
    <subcellularLocation>
        <location>Cytoplasm</location>
    </subcellularLocation>
</comment>
<dbReference type="EMBL" id="J02656">
    <property type="protein sequence ID" value="AAA27036.1"/>
    <property type="molecule type" value="Genomic_DNA"/>
</dbReference>
<dbReference type="EMBL" id="AE006468">
    <property type="protein sequence ID" value="AAL20836.1"/>
    <property type="molecule type" value="Genomic_DNA"/>
</dbReference>
<dbReference type="PIR" id="A26143">
    <property type="entry name" value="A26143"/>
</dbReference>
<dbReference type="RefSeq" id="NP_460877.1">
    <property type="nucleotide sequence ID" value="NC_003197.2"/>
</dbReference>
<dbReference type="RefSeq" id="WP_000147295.1">
    <property type="nucleotide sequence ID" value="NC_003197.2"/>
</dbReference>
<dbReference type="SMR" id="P06110"/>
<dbReference type="DIP" id="DIP-61269N"/>
<dbReference type="IntAct" id="P06110">
    <property type="interactions" value="2"/>
</dbReference>
<dbReference type="STRING" id="99287.STM1920"/>
<dbReference type="PaxDb" id="99287-STM1920"/>
<dbReference type="GeneID" id="1253441"/>
<dbReference type="KEGG" id="stm:STM1920"/>
<dbReference type="PATRIC" id="fig|99287.12.peg.2037"/>
<dbReference type="HOGENOM" id="CLU_048995_1_0_6"/>
<dbReference type="OMA" id="CVNIMSV"/>
<dbReference type="PhylomeDB" id="P06110"/>
<dbReference type="BioCyc" id="SENT99287:STM1920-MONOMER"/>
<dbReference type="Proteomes" id="UP000001014">
    <property type="component" value="Chromosome"/>
</dbReference>
<dbReference type="GO" id="GO:0005829">
    <property type="term" value="C:cytosol"/>
    <property type="evidence" value="ECO:0000318"/>
    <property type="project" value="GO_Central"/>
</dbReference>
<dbReference type="GO" id="GO:0006935">
    <property type="term" value="P:chemotaxis"/>
    <property type="evidence" value="ECO:0000318"/>
    <property type="project" value="GO_Central"/>
</dbReference>
<dbReference type="GO" id="GO:1903911">
    <property type="term" value="P:positive regulation of receptor clustering"/>
    <property type="evidence" value="ECO:0000315"/>
    <property type="project" value="AgBase"/>
</dbReference>
<dbReference type="GO" id="GO:0007165">
    <property type="term" value="P:signal transduction"/>
    <property type="evidence" value="ECO:0007669"/>
    <property type="project" value="InterPro"/>
</dbReference>
<dbReference type="CDD" id="cd00732">
    <property type="entry name" value="CheW"/>
    <property type="match status" value="1"/>
</dbReference>
<dbReference type="FunFam" id="2.40.50.180:FF:000002">
    <property type="entry name" value="Chemotaxis protein CheW"/>
    <property type="match status" value="1"/>
</dbReference>
<dbReference type="Gene3D" id="2.40.50.180">
    <property type="entry name" value="CheA-289, Domain 4"/>
    <property type="match status" value="1"/>
</dbReference>
<dbReference type="Gene3D" id="2.30.30.40">
    <property type="entry name" value="SH3 Domains"/>
    <property type="match status" value="1"/>
</dbReference>
<dbReference type="InterPro" id="IPR039315">
    <property type="entry name" value="CheW"/>
</dbReference>
<dbReference type="InterPro" id="IPR036061">
    <property type="entry name" value="CheW-like_dom_sf"/>
</dbReference>
<dbReference type="InterPro" id="IPR002545">
    <property type="entry name" value="CheW-lke_dom"/>
</dbReference>
<dbReference type="NCBIfam" id="NF007903">
    <property type="entry name" value="PRK10612.1"/>
    <property type="match status" value="1"/>
</dbReference>
<dbReference type="PANTHER" id="PTHR22617:SF45">
    <property type="entry name" value="CHEMOTAXIS PROTEIN CHEW"/>
    <property type="match status" value="1"/>
</dbReference>
<dbReference type="PANTHER" id="PTHR22617">
    <property type="entry name" value="CHEMOTAXIS SENSOR HISTIDINE KINASE-RELATED"/>
    <property type="match status" value="1"/>
</dbReference>
<dbReference type="Pfam" id="PF01584">
    <property type="entry name" value="CheW"/>
    <property type="match status" value="1"/>
</dbReference>
<dbReference type="SMART" id="SM00260">
    <property type="entry name" value="CheW"/>
    <property type="match status" value="1"/>
</dbReference>
<dbReference type="SUPFAM" id="SSF50341">
    <property type="entry name" value="CheW-like"/>
    <property type="match status" value="1"/>
</dbReference>
<dbReference type="PROSITE" id="PS50851">
    <property type="entry name" value="CHEW"/>
    <property type="match status" value="1"/>
</dbReference>
<organism>
    <name type="scientific">Salmonella typhimurium (strain LT2 / SGSC1412 / ATCC 700720)</name>
    <dbReference type="NCBI Taxonomy" id="99287"/>
    <lineage>
        <taxon>Bacteria</taxon>
        <taxon>Pseudomonadati</taxon>
        <taxon>Pseudomonadota</taxon>
        <taxon>Gammaproteobacteria</taxon>
        <taxon>Enterobacterales</taxon>
        <taxon>Enterobacteriaceae</taxon>
        <taxon>Salmonella</taxon>
    </lineage>
</organism>
<evidence type="ECO:0000255" key="1">
    <source>
        <dbReference type="PROSITE-ProRule" id="PRU00052"/>
    </source>
</evidence>
<proteinExistence type="evidence at protein level"/>